<proteinExistence type="inferred from homology"/>
<organism>
    <name type="scientific">Methanococcus maripaludis (strain C7 / ATCC BAA-1331)</name>
    <dbReference type="NCBI Taxonomy" id="426368"/>
    <lineage>
        <taxon>Archaea</taxon>
        <taxon>Methanobacteriati</taxon>
        <taxon>Methanobacteriota</taxon>
        <taxon>Methanomada group</taxon>
        <taxon>Methanococci</taxon>
        <taxon>Methanococcales</taxon>
        <taxon>Methanococcaceae</taxon>
        <taxon>Methanococcus</taxon>
    </lineage>
</organism>
<comment type="catalytic activity">
    <reaction evidence="1">
        <text>dTMP + ATP = dTDP + ADP</text>
        <dbReference type="Rhea" id="RHEA:13517"/>
        <dbReference type="ChEBI" id="CHEBI:30616"/>
        <dbReference type="ChEBI" id="CHEBI:58369"/>
        <dbReference type="ChEBI" id="CHEBI:63528"/>
        <dbReference type="ChEBI" id="CHEBI:456216"/>
        <dbReference type="EC" id="2.7.4.9"/>
    </reaction>
</comment>
<comment type="similarity">
    <text evidence="1">Belongs to the thymidylate kinase family.</text>
</comment>
<protein>
    <recommendedName>
        <fullName evidence="1">Probable thymidylate kinase</fullName>
        <ecNumber evidence="1">2.7.4.9</ecNumber>
    </recommendedName>
    <alternativeName>
        <fullName evidence="1">dTMP kinase</fullName>
    </alternativeName>
</protein>
<keyword id="KW-0067">ATP-binding</keyword>
<keyword id="KW-0418">Kinase</keyword>
<keyword id="KW-0545">Nucleotide biosynthesis</keyword>
<keyword id="KW-0547">Nucleotide-binding</keyword>
<keyword id="KW-0808">Transferase</keyword>
<feature type="chain" id="PRO_1000023224" description="Probable thymidylate kinase">
    <location>
        <begin position="1"/>
        <end position="199"/>
    </location>
</feature>
<feature type="binding site" evidence="1">
    <location>
        <begin position="9"/>
        <end position="16"/>
    </location>
    <ligand>
        <name>ATP</name>
        <dbReference type="ChEBI" id="CHEBI:30616"/>
    </ligand>
</feature>
<reference key="1">
    <citation type="submission" date="2007-06" db="EMBL/GenBank/DDBJ databases">
        <title>Complete sequence of Methanococcus maripaludis C7.</title>
        <authorList>
            <consortium name="US DOE Joint Genome Institute"/>
            <person name="Copeland A."/>
            <person name="Lucas S."/>
            <person name="Lapidus A."/>
            <person name="Barry K."/>
            <person name="Glavina del Rio T."/>
            <person name="Dalin E."/>
            <person name="Tice H."/>
            <person name="Pitluck S."/>
            <person name="Clum A."/>
            <person name="Schmutz J."/>
            <person name="Larimer F."/>
            <person name="Land M."/>
            <person name="Hauser L."/>
            <person name="Kyrpides N."/>
            <person name="Anderson I."/>
            <person name="Sieprawska-Lupa M."/>
            <person name="Whitman W.B."/>
            <person name="Richardson P."/>
        </authorList>
    </citation>
    <scope>NUCLEOTIDE SEQUENCE [LARGE SCALE GENOMIC DNA]</scope>
    <source>
        <strain>C7 / ATCC BAA-1331</strain>
    </source>
</reference>
<evidence type="ECO:0000255" key="1">
    <source>
        <dbReference type="HAMAP-Rule" id="MF_00165"/>
    </source>
</evidence>
<accession>A6VFY2</accession>
<name>KTHY_METM7</name>
<gene>
    <name evidence="1" type="primary">tmk</name>
    <name type="ordered locus">MmarC7_0288</name>
</gene>
<dbReference type="EC" id="2.7.4.9" evidence="1"/>
<dbReference type="EMBL" id="CP000745">
    <property type="protein sequence ID" value="ABR65358.1"/>
    <property type="molecule type" value="Genomic_DNA"/>
</dbReference>
<dbReference type="SMR" id="A6VFY2"/>
<dbReference type="STRING" id="426368.MmarC7_0288"/>
<dbReference type="KEGG" id="mmz:MmarC7_0288"/>
<dbReference type="eggNOG" id="arCOG01891">
    <property type="taxonomic scope" value="Archaea"/>
</dbReference>
<dbReference type="HOGENOM" id="CLU_049131_0_2_2"/>
<dbReference type="OrthoDB" id="43083at2157"/>
<dbReference type="GO" id="GO:0005737">
    <property type="term" value="C:cytoplasm"/>
    <property type="evidence" value="ECO:0007669"/>
    <property type="project" value="TreeGrafter"/>
</dbReference>
<dbReference type="GO" id="GO:0005524">
    <property type="term" value="F:ATP binding"/>
    <property type="evidence" value="ECO:0007669"/>
    <property type="project" value="UniProtKB-UniRule"/>
</dbReference>
<dbReference type="GO" id="GO:0004798">
    <property type="term" value="F:dTMP kinase activity"/>
    <property type="evidence" value="ECO:0007669"/>
    <property type="project" value="UniProtKB-UniRule"/>
</dbReference>
<dbReference type="GO" id="GO:0006233">
    <property type="term" value="P:dTDP biosynthetic process"/>
    <property type="evidence" value="ECO:0007669"/>
    <property type="project" value="InterPro"/>
</dbReference>
<dbReference type="GO" id="GO:0006235">
    <property type="term" value="P:dTTP biosynthetic process"/>
    <property type="evidence" value="ECO:0007669"/>
    <property type="project" value="UniProtKB-UniRule"/>
</dbReference>
<dbReference type="GO" id="GO:0006227">
    <property type="term" value="P:dUDP biosynthetic process"/>
    <property type="evidence" value="ECO:0007669"/>
    <property type="project" value="TreeGrafter"/>
</dbReference>
<dbReference type="CDD" id="cd01672">
    <property type="entry name" value="TMPK"/>
    <property type="match status" value="1"/>
</dbReference>
<dbReference type="Gene3D" id="3.40.50.300">
    <property type="entry name" value="P-loop containing nucleotide triphosphate hydrolases"/>
    <property type="match status" value="1"/>
</dbReference>
<dbReference type="HAMAP" id="MF_00165">
    <property type="entry name" value="Thymidylate_kinase"/>
    <property type="match status" value="1"/>
</dbReference>
<dbReference type="InterPro" id="IPR027417">
    <property type="entry name" value="P-loop_NTPase"/>
</dbReference>
<dbReference type="InterPro" id="IPR039430">
    <property type="entry name" value="Thymidylate_kin-like_dom"/>
</dbReference>
<dbReference type="InterPro" id="IPR018095">
    <property type="entry name" value="Thymidylate_kin_CS"/>
</dbReference>
<dbReference type="InterPro" id="IPR018094">
    <property type="entry name" value="Thymidylate_kinase"/>
</dbReference>
<dbReference type="NCBIfam" id="TIGR00041">
    <property type="entry name" value="DTMP_kinase"/>
    <property type="match status" value="1"/>
</dbReference>
<dbReference type="PANTHER" id="PTHR10344">
    <property type="entry name" value="THYMIDYLATE KINASE"/>
    <property type="match status" value="1"/>
</dbReference>
<dbReference type="PANTHER" id="PTHR10344:SF4">
    <property type="entry name" value="UMP-CMP KINASE 2, MITOCHONDRIAL"/>
    <property type="match status" value="1"/>
</dbReference>
<dbReference type="Pfam" id="PF02223">
    <property type="entry name" value="Thymidylate_kin"/>
    <property type="match status" value="1"/>
</dbReference>
<dbReference type="SUPFAM" id="SSF52540">
    <property type="entry name" value="P-loop containing nucleoside triphosphate hydrolases"/>
    <property type="match status" value="1"/>
</dbReference>
<dbReference type="PROSITE" id="PS01331">
    <property type="entry name" value="THYMIDYLATE_KINASE"/>
    <property type="match status" value="1"/>
</dbReference>
<sequence>MNKFIVFEGIDGCGKTTQAKLIAEKLNAKFTFEPTDGKIGKSIREILSGSKCQKETLALLFAADRVEHVSKIEEDLKKSHVVSDRYVYSSIVYQMSQGIPKDFIYTINDYAKTPDLVVLLDVDLNEALKRMESREKEIFEKIEIQKKIKEGYYSLINSENEKFMPKYGFIIIDTTSKSITQVFDEILNAIIDKIPDIIQ</sequence>